<feature type="chain" id="PRO_1000194838" description="Phosphoribosylformylglycinamidine synthase subunit PurL">
    <location>
        <begin position="1"/>
        <end position="700"/>
    </location>
</feature>
<feature type="active site" evidence="1">
    <location>
        <position position="34"/>
    </location>
</feature>
<feature type="active site" description="Proton acceptor" evidence="1">
    <location>
        <position position="81"/>
    </location>
</feature>
<feature type="binding site" evidence="1">
    <location>
        <position position="37"/>
    </location>
    <ligand>
        <name>ATP</name>
        <dbReference type="ChEBI" id="CHEBI:30616"/>
    </ligand>
</feature>
<feature type="binding site" evidence="1">
    <location>
        <position position="79"/>
    </location>
    <ligand>
        <name>Mg(2+)</name>
        <dbReference type="ChEBI" id="CHEBI:18420"/>
        <label>1</label>
    </ligand>
</feature>
<feature type="binding site" evidence="1">
    <location>
        <begin position="80"/>
        <end position="83"/>
    </location>
    <ligand>
        <name>substrate</name>
    </ligand>
</feature>
<feature type="binding site" evidence="1">
    <location>
        <position position="102"/>
    </location>
    <ligand>
        <name>substrate</name>
    </ligand>
</feature>
<feature type="binding site" evidence="1">
    <location>
        <position position="103"/>
    </location>
    <ligand>
        <name>Mg(2+)</name>
        <dbReference type="ChEBI" id="CHEBI:18420"/>
        <label>2</label>
    </ligand>
</feature>
<feature type="binding site" evidence="1">
    <location>
        <position position="227"/>
    </location>
    <ligand>
        <name>substrate</name>
    </ligand>
</feature>
<feature type="binding site" evidence="1">
    <location>
        <position position="255"/>
    </location>
    <ligand>
        <name>Mg(2+)</name>
        <dbReference type="ChEBI" id="CHEBI:18420"/>
        <label>2</label>
    </ligand>
</feature>
<feature type="binding site" evidence="1">
    <location>
        <begin position="299"/>
        <end position="301"/>
    </location>
    <ligand>
        <name>substrate</name>
    </ligand>
</feature>
<feature type="binding site" evidence="1">
    <location>
        <position position="476"/>
    </location>
    <ligand>
        <name>ATP</name>
        <dbReference type="ChEBI" id="CHEBI:30616"/>
    </ligand>
</feature>
<feature type="binding site" evidence="1">
    <location>
        <position position="513"/>
    </location>
    <ligand>
        <name>ATP</name>
        <dbReference type="ChEBI" id="CHEBI:30616"/>
    </ligand>
</feature>
<feature type="binding site" evidence="1">
    <location>
        <position position="514"/>
    </location>
    <ligand>
        <name>Mg(2+)</name>
        <dbReference type="ChEBI" id="CHEBI:18420"/>
        <label>1</label>
    </ligand>
</feature>
<feature type="binding site" evidence="1">
    <location>
        <position position="516"/>
    </location>
    <ligand>
        <name>substrate</name>
    </ligand>
</feature>
<proteinExistence type="inferred from homology"/>
<comment type="function">
    <text evidence="1">Part of the phosphoribosylformylglycinamidine synthase complex involved in the purines biosynthetic pathway. Catalyzes the ATP-dependent conversion of formylglycinamide ribonucleotide (FGAR) and glutamine to yield formylglycinamidine ribonucleotide (FGAM) and glutamate. The FGAM synthase complex is composed of three subunits. PurQ produces an ammonia molecule by converting glutamine to glutamate. PurL transfers the ammonia molecule to FGAR to form FGAM in an ATP-dependent manner. PurS interacts with PurQ and PurL and is thought to assist in the transfer of the ammonia molecule from PurQ to PurL.</text>
</comment>
<comment type="catalytic activity">
    <reaction evidence="1">
        <text>N(2)-formyl-N(1)-(5-phospho-beta-D-ribosyl)glycinamide + L-glutamine + ATP + H2O = 2-formamido-N(1)-(5-O-phospho-beta-D-ribosyl)acetamidine + L-glutamate + ADP + phosphate + H(+)</text>
        <dbReference type="Rhea" id="RHEA:17129"/>
        <dbReference type="ChEBI" id="CHEBI:15377"/>
        <dbReference type="ChEBI" id="CHEBI:15378"/>
        <dbReference type="ChEBI" id="CHEBI:29985"/>
        <dbReference type="ChEBI" id="CHEBI:30616"/>
        <dbReference type="ChEBI" id="CHEBI:43474"/>
        <dbReference type="ChEBI" id="CHEBI:58359"/>
        <dbReference type="ChEBI" id="CHEBI:147286"/>
        <dbReference type="ChEBI" id="CHEBI:147287"/>
        <dbReference type="ChEBI" id="CHEBI:456216"/>
        <dbReference type="EC" id="6.3.5.3"/>
    </reaction>
</comment>
<comment type="pathway">
    <text evidence="1">Purine metabolism; IMP biosynthesis via de novo pathway; 5-amino-1-(5-phospho-D-ribosyl)imidazole from N(2)-formyl-N(1)-(5-phospho-D-ribosyl)glycinamide: step 1/2.</text>
</comment>
<comment type="subunit">
    <text evidence="1">Monomer. Part of the FGAM synthase complex composed of 1 PurL, 1 PurQ and 2 PurS subunits.</text>
</comment>
<comment type="subcellular location">
    <subcellularLocation>
        <location evidence="1">Cytoplasm</location>
    </subcellularLocation>
</comment>
<comment type="similarity">
    <text evidence="1">Belongs to the FGAMS family.</text>
</comment>
<organism>
    <name type="scientific">Halobacterium salinarum (strain ATCC 29341 / DSM 671 / R1)</name>
    <dbReference type="NCBI Taxonomy" id="478009"/>
    <lineage>
        <taxon>Archaea</taxon>
        <taxon>Methanobacteriati</taxon>
        <taxon>Methanobacteriota</taxon>
        <taxon>Stenosarchaea group</taxon>
        <taxon>Halobacteria</taxon>
        <taxon>Halobacteriales</taxon>
        <taxon>Halobacteriaceae</taxon>
        <taxon>Halobacterium</taxon>
        <taxon>Halobacterium salinarum NRC-34001</taxon>
    </lineage>
</organism>
<name>PURL_HALS3</name>
<sequence length="700" mass="71436">MSLGDSDRERVVAALGRDPTPAEAALFENLWSEHCAYRSSRSLLSAFDSDSEAVVVGPGDDAAVVRVPGTDQLVTVGVESHNHPSYVDPYDGAATGVGGIVRDTLSMGAYPIALADALYFGDFDDEHARYLLDGVVEGISDYGNAIGVPTVAGATQFHDGYTGNPLVNVACVGLVTEDRLVTAAAKSPGNKLVLVGNATGRDGLGGASFASEDLAEDAETADRPAVQVGDPYTEKLLIEANETLLDRDLVVAARDLGAAGLGGASSEMVAQGELGARITLDAVHQREPEMNAMEILLAESQERMCYEVAPADVDAVREVATRYDLGCSVIGEVTTGNYVCEFDGETVVDAPATVLADGAPATDQPSTVPQAPATDRPDPALGTAIDAVLSAPNTASNEWVYRQYDHEVGARTVQRPGEDAAGLALHEADDGTTVALSAGANPGWTACQPYAGAYATAVENATNLAAAGAEPLAAVDCLNGGNPEDPDVYGGFEAMVAGLADGCRAIDTPVVGGNVSLYNDSATGPIAPTPTLAVVGYRDQHPVPGSGLAGDGDLVLVGGHADGLGGSVYLQALGGTDQFPAADAAGVDAVREAATRADTLAVHDISDGGLAVTLAEMVTADAGATVTVPGLAALFSECPGRAVVETRDADALQAALDVPVVRLGSATTDGTLSVTVDDETVTRDAATIRDHRGVIARELD</sequence>
<dbReference type="EC" id="6.3.5.3" evidence="1"/>
<dbReference type="EMBL" id="AM774415">
    <property type="protein sequence ID" value="CAP13580.1"/>
    <property type="molecule type" value="Genomic_DNA"/>
</dbReference>
<dbReference type="RefSeq" id="WP_010902605.1">
    <property type="nucleotide sequence ID" value="NC_010364.1"/>
</dbReference>
<dbReference type="SMR" id="B0R4B5"/>
<dbReference type="EnsemblBacteria" id="CAP13580">
    <property type="protein sequence ID" value="CAP13580"/>
    <property type="gene ID" value="OE_2274R"/>
</dbReference>
<dbReference type="GeneID" id="68693692"/>
<dbReference type="KEGG" id="hsl:OE_2274R"/>
<dbReference type="HOGENOM" id="CLU_003100_0_1_2"/>
<dbReference type="PhylomeDB" id="B0R4B5"/>
<dbReference type="UniPathway" id="UPA00074">
    <property type="reaction ID" value="UER00128"/>
</dbReference>
<dbReference type="Proteomes" id="UP000001321">
    <property type="component" value="Chromosome"/>
</dbReference>
<dbReference type="GO" id="GO:0005737">
    <property type="term" value="C:cytoplasm"/>
    <property type="evidence" value="ECO:0007669"/>
    <property type="project" value="UniProtKB-SubCell"/>
</dbReference>
<dbReference type="GO" id="GO:0005524">
    <property type="term" value="F:ATP binding"/>
    <property type="evidence" value="ECO:0007669"/>
    <property type="project" value="UniProtKB-UniRule"/>
</dbReference>
<dbReference type="GO" id="GO:0000287">
    <property type="term" value="F:magnesium ion binding"/>
    <property type="evidence" value="ECO:0007669"/>
    <property type="project" value="UniProtKB-UniRule"/>
</dbReference>
<dbReference type="GO" id="GO:0004642">
    <property type="term" value="F:phosphoribosylformylglycinamidine synthase activity"/>
    <property type="evidence" value="ECO:0007669"/>
    <property type="project" value="UniProtKB-UniRule"/>
</dbReference>
<dbReference type="GO" id="GO:0006189">
    <property type="term" value="P:'de novo' IMP biosynthetic process"/>
    <property type="evidence" value="ECO:0007669"/>
    <property type="project" value="UniProtKB-UniRule"/>
</dbReference>
<dbReference type="CDD" id="cd02203">
    <property type="entry name" value="PurL_repeat1"/>
    <property type="match status" value="1"/>
</dbReference>
<dbReference type="CDD" id="cd02204">
    <property type="entry name" value="PurL_repeat2"/>
    <property type="match status" value="1"/>
</dbReference>
<dbReference type="Gene3D" id="3.90.650.10">
    <property type="entry name" value="PurM-like C-terminal domain"/>
    <property type="match status" value="2"/>
</dbReference>
<dbReference type="Gene3D" id="3.30.1330.10">
    <property type="entry name" value="PurM-like, N-terminal domain"/>
    <property type="match status" value="2"/>
</dbReference>
<dbReference type="HAMAP" id="MF_00420">
    <property type="entry name" value="PurL_2"/>
    <property type="match status" value="1"/>
</dbReference>
<dbReference type="InterPro" id="IPR010074">
    <property type="entry name" value="PRibForGlyAmidine_synth_PurL"/>
</dbReference>
<dbReference type="InterPro" id="IPR041609">
    <property type="entry name" value="PurL_linker"/>
</dbReference>
<dbReference type="InterPro" id="IPR010918">
    <property type="entry name" value="PurM-like_C_dom"/>
</dbReference>
<dbReference type="InterPro" id="IPR036676">
    <property type="entry name" value="PurM-like_C_sf"/>
</dbReference>
<dbReference type="InterPro" id="IPR016188">
    <property type="entry name" value="PurM-like_N"/>
</dbReference>
<dbReference type="InterPro" id="IPR036921">
    <property type="entry name" value="PurM-like_N_sf"/>
</dbReference>
<dbReference type="NCBIfam" id="TIGR01736">
    <property type="entry name" value="FGAM_synth_II"/>
    <property type="match status" value="1"/>
</dbReference>
<dbReference type="NCBIfam" id="NF002290">
    <property type="entry name" value="PRK01213.1"/>
    <property type="match status" value="1"/>
</dbReference>
<dbReference type="PANTHER" id="PTHR43555">
    <property type="entry name" value="PHOSPHORIBOSYLFORMYLGLYCINAMIDINE SYNTHASE SUBUNIT PURL"/>
    <property type="match status" value="1"/>
</dbReference>
<dbReference type="PANTHER" id="PTHR43555:SF1">
    <property type="entry name" value="PHOSPHORIBOSYLFORMYLGLYCINAMIDINE SYNTHASE SUBUNIT PURL"/>
    <property type="match status" value="1"/>
</dbReference>
<dbReference type="Pfam" id="PF00586">
    <property type="entry name" value="AIRS"/>
    <property type="match status" value="2"/>
</dbReference>
<dbReference type="Pfam" id="PF02769">
    <property type="entry name" value="AIRS_C"/>
    <property type="match status" value="2"/>
</dbReference>
<dbReference type="Pfam" id="PF18072">
    <property type="entry name" value="FGAR-AT_linker"/>
    <property type="match status" value="1"/>
</dbReference>
<dbReference type="PIRSF" id="PIRSF001587">
    <property type="entry name" value="FGAM_synthase_II"/>
    <property type="match status" value="1"/>
</dbReference>
<dbReference type="SUPFAM" id="SSF56042">
    <property type="entry name" value="PurM C-terminal domain-like"/>
    <property type="match status" value="2"/>
</dbReference>
<dbReference type="SUPFAM" id="SSF55326">
    <property type="entry name" value="PurM N-terminal domain-like"/>
    <property type="match status" value="2"/>
</dbReference>
<gene>
    <name evidence="1" type="primary">purL</name>
    <name type="ordered locus">OE_2274R</name>
</gene>
<protein>
    <recommendedName>
        <fullName evidence="1">Phosphoribosylformylglycinamidine synthase subunit PurL</fullName>
        <shortName evidence="1">FGAM synthase</shortName>
        <ecNumber evidence="1">6.3.5.3</ecNumber>
    </recommendedName>
    <alternativeName>
        <fullName evidence="1">Formylglycinamide ribonucleotide amidotransferase subunit II</fullName>
        <shortName evidence="1">FGAR amidotransferase II</shortName>
        <shortName evidence="1">FGAR-AT II</shortName>
    </alternativeName>
    <alternativeName>
        <fullName evidence="1">Glutamine amidotransferase PurL</fullName>
    </alternativeName>
    <alternativeName>
        <fullName evidence="1">Phosphoribosylformylglycinamidine synthase subunit II</fullName>
    </alternativeName>
</protein>
<evidence type="ECO:0000255" key="1">
    <source>
        <dbReference type="HAMAP-Rule" id="MF_00420"/>
    </source>
</evidence>
<reference key="1">
    <citation type="journal article" date="2008" name="Genomics">
        <title>Evolution in the laboratory: the genome of Halobacterium salinarum strain R1 compared to that of strain NRC-1.</title>
        <authorList>
            <person name="Pfeiffer F."/>
            <person name="Schuster S.C."/>
            <person name="Broicher A."/>
            <person name="Falb M."/>
            <person name="Palm P."/>
            <person name="Rodewald K."/>
            <person name="Ruepp A."/>
            <person name="Soppa J."/>
            <person name="Tittor J."/>
            <person name="Oesterhelt D."/>
        </authorList>
    </citation>
    <scope>NUCLEOTIDE SEQUENCE [LARGE SCALE GENOMIC DNA]</scope>
    <source>
        <strain>ATCC 29341 / DSM 671 / R1</strain>
    </source>
</reference>
<accession>B0R4B5</accession>
<keyword id="KW-0067">ATP-binding</keyword>
<keyword id="KW-0963">Cytoplasm</keyword>
<keyword id="KW-0436">Ligase</keyword>
<keyword id="KW-0460">Magnesium</keyword>
<keyword id="KW-0479">Metal-binding</keyword>
<keyword id="KW-0547">Nucleotide-binding</keyword>
<keyword id="KW-0658">Purine biosynthesis</keyword>